<comment type="function">
    <text evidence="1">Involved in the modulation of the activity of the glucose-phosphotransferase system (glucose-PTS). Interacts with the transcriptional repressor Mlc, preventing its interaction with DNA and leading to the modulation of expression of genes regulated by Mlc, including ptsG, which encodes the PTS system glucose-specific EIICB component.</text>
</comment>
<comment type="function">
    <text evidence="1">Shows zinc-dependent metallopeptidase activity.</text>
</comment>
<comment type="cofactor">
    <cofactor evidence="1">
        <name>Zn(2+)</name>
        <dbReference type="ChEBI" id="CHEBI:29105"/>
    </cofactor>
    <text evidence="1">Binds 1 zinc ion per subunit.</text>
</comment>
<comment type="subunit">
    <text evidence="1">Interacts with Mlc.</text>
</comment>
<comment type="subcellular location">
    <subcellularLocation>
        <location evidence="1">Cytoplasm</location>
    </subcellularLocation>
</comment>
<comment type="similarity">
    <text evidence="1">Belongs to the MtfA family.</text>
</comment>
<dbReference type="EC" id="3.4.11.-" evidence="1"/>
<dbReference type="EMBL" id="CU928158">
    <property type="protein sequence ID" value="CAQ89460.1"/>
    <property type="molecule type" value="Genomic_DNA"/>
</dbReference>
<dbReference type="RefSeq" id="WP_000598930.1">
    <property type="nucleotide sequence ID" value="NC_011740.1"/>
</dbReference>
<dbReference type="SMR" id="B7LTQ3"/>
<dbReference type="MEROPS" id="M90.001"/>
<dbReference type="GeneID" id="75057017"/>
<dbReference type="KEGG" id="efe:EFER_1953"/>
<dbReference type="HOGENOM" id="CLU_063037_2_0_6"/>
<dbReference type="OrthoDB" id="9786424at2"/>
<dbReference type="Proteomes" id="UP000000745">
    <property type="component" value="Chromosome"/>
</dbReference>
<dbReference type="GO" id="GO:0005829">
    <property type="term" value="C:cytosol"/>
    <property type="evidence" value="ECO:0007669"/>
    <property type="project" value="TreeGrafter"/>
</dbReference>
<dbReference type="GO" id="GO:0004177">
    <property type="term" value="F:aminopeptidase activity"/>
    <property type="evidence" value="ECO:0007669"/>
    <property type="project" value="UniProtKB-UniRule"/>
</dbReference>
<dbReference type="GO" id="GO:0008237">
    <property type="term" value="F:metallopeptidase activity"/>
    <property type="evidence" value="ECO:0007669"/>
    <property type="project" value="UniProtKB-UniRule"/>
</dbReference>
<dbReference type="GO" id="GO:0008270">
    <property type="term" value="F:zinc ion binding"/>
    <property type="evidence" value="ECO:0007669"/>
    <property type="project" value="UniProtKB-UniRule"/>
</dbReference>
<dbReference type="GO" id="GO:0006508">
    <property type="term" value="P:proteolysis"/>
    <property type="evidence" value="ECO:0007669"/>
    <property type="project" value="UniProtKB-KW"/>
</dbReference>
<dbReference type="CDD" id="cd20169">
    <property type="entry name" value="Peptidase_M90_mtfA"/>
    <property type="match status" value="1"/>
</dbReference>
<dbReference type="FunFam" id="1.10.472.150:FF:000001">
    <property type="entry name" value="Protein MtfA"/>
    <property type="match status" value="1"/>
</dbReference>
<dbReference type="FunFam" id="3.40.390.10:FF:000012">
    <property type="entry name" value="Protein MtfA"/>
    <property type="match status" value="1"/>
</dbReference>
<dbReference type="Gene3D" id="3.40.390.10">
    <property type="entry name" value="Collagenase (Catalytic Domain)"/>
    <property type="match status" value="1"/>
</dbReference>
<dbReference type="Gene3D" id="1.10.472.150">
    <property type="entry name" value="Glucose-regulated metallo-peptidase M90, N-terminal domain"/>
    <property type="match status" value="1"/>
</dbReference>
<dbReference type="HAMAP" id="MF_01593">
    <property type="entry name" value="MtfA"/>
    <property type="match status" value="1"/>
</dbReference>
<dbReference type="InterPro" id="IPR024079">
    <property type="entry name" value="MetalloPept_cat_dom_sf"/>
</dbReference>
<dbReference type="InterPro" id="IPR057256">
    <property type="entry name" value="MtfA_enterob"/>
</dbReference>
<dbReference type="InterPro" id="IPR010384">
    <property type="entry name" value="MtfA_fam"/>
</dbReference>
<dbReference type="InterPro" id="IPR042252">
    <property type="entry name" value="MtfA_N"/>
</dbReference>
<dbReference type="NCBIfam" id="NF011939">
    <property type="entry name" value="PRK15410.1"/>
    <property type="match status" value="1"/>
</dbReference>
<dbReference type="PANTHER" id="PTHR30164">
    <property type="entry name" value="MTFA PEPTIDASE"/>
    <property type="match status" value="1"/>
</dbReference>
<dbReference type="PANTHER" id="PTHR30164:SF2">
    <property type="entry name" value="PROTEIN MTFA"/>
    <property type="match status" value="1"/>
</dbReference>
<dbReference type="Pfam" id="PF06167">
    <property type="entry name" value="Peptidase_M90"/>
    <property type="match status" value="1"/>
</dbReference>
<dbReference type="SUPFAM" id="SSF55486">
    <property type="entry name" value="Metalloproteases ('zincins'), catalytic domain"/>
    <property type="match status" value="1"/>
</dbReference>
<reference key="1">
    <citation type="journal article" date="2009" name="PLoS Genet.">
        <title>Organised genome dynamics in the Escherichia coli species results in highly diverse adaptive paths.</title>
        <authorList>
            <person name="Touchon M."/>
            <person name="Hoede C."/>
            <person name="Tenaillon O."/>
            <person name="Barbe V."/>
            <person name="Baeriswyl S."/>
            <person name="Bidet P."/>
            <person name="Bingen E."/>
            <person name="Bonacorsi S."/>
            <person name="Bouchier C."/>
            <person name="Bouvet O."/>
            <person name="Calteau A."/>
            <person name="Chiapello H."/>
            <person name="Clermont O."/>
            <person name="Cruveiller S."/>
            <person name="Danchin A."/>
            <person name="Diard M."/>
            <person name="Dossat C."/>
            <person name="Karoui M.E."/>
            <person name="Frapy E."/>
            <person name="Garry L."/>
            <person name="Ghigo J.M."/>
            <person name="Gilles A.M."/>
            <person name="Johnson J."/>
            <person name="Le Bouguenec C."/>
            <person name="Lescat M."/>
            <person name="Mangenot S."/>
            <person name="Martinez-Jehanne V."/>
            <person name="Matic I."/>
            <person name="Nassif X."/>
            <person name="Oztas S."/>
            <person name="Petit M.A."/>
            <person name="Pichon C."/>
            <person name="Rouy Z."/>
            <person name="Ruf C.S."/>
            <person name="Schneider D."/>
            <person name="Tourret J."/>
            <person name="Vacherie B."/>
            <person name="Vallenet D."/>
            <person name="Medigue C."/>
            <person name="Rocha E.P.C."/>
            <person name="Denamur E."/>
        </authorList>
    </citation>
    <scope>NUCLEOTIDE SEQUENCE [LARGE SCALE GENOMIC DNA]</scope>
    <source>
        <strain>ATCC 35469 / DSM 13698 / BCRC 15582 / CCUG 18766 / IAM 14443 / JCM 21226 / LMG 7866 / NBRC 102419 / NCTC 12128 / CDC 0568-73</strain>
    </source>
</reference>
<sequence length="265" mass="30165">MIKWPWKAQETPQQDNPPWEDALAIPILHSLTTEEQTRLVALAERFLQQKRIVPLQGFELDSLKSARIALLFCLPVLELGIEWLDGFHEVLIYPAPFVVDDEWEDDIGLVHNQRIVQSGQSWQQGPIVLNWVDIRDSFDASGFNLIIHEVAHKLDMRNGDRASGIPLIPLREVAGWEHDLHAAMENIQEEIDLVGETASSIDAYAATDPAECFAVLSEYFFSAPELFAPRFPSLWQRFCQFYGQNPLLRLRNSPNNDASPTTNVH</sequence>
<gene>
    <name evidence="1" type="primary">mtfA</name>
    <name type="ordered locus">EFER_1953</name>
</gene>
<feature type="chain" id="PRO_1000147840" description="Mlc titration factor A">
    <location>
        <begin position="1"/>
        <end position="265"/>
    </location>
</feature>
<feature type="binding site" evidence="1">
    <location>
        <position position="111"/>
    </location>
    <ligand>
        <name>Zn(2+)</name>
        <dbReference type="ChEBI" id="CHEBI:29105"/>
    </ligand>
</feature>
<feature type="binding site" evidence="1">
    <location>
        <position position="148"/>
    </location>
    <ligand>
        <name>Zn(2+)</name>
        <dbReference type="ChEBI" id="CHEBI:29105"/>
    </ligand>
</feature>
<feature type="binding site" evidence="1">
    <location>
        <position position="152"/>
    </location>
    <ligand>
        <name>Zn(2+)</name>
        <dbReference type="ChEBI" id="CHEBI:29105"/>
    </ligand>
</feature>
<feature type="binding site" evidence="1">
    <location>
        <position position="211"/>
    </location>
    <ligand>
        <name>Zn(2+)</name>
        <dbReference type="ChEBI" id="CHEBI:29105"/>
    </ligand>
</feature>
<accession>B7LTQ3</accession>
<organism>
    <name type="scientific">Escherichia fergusonii (strain ATCC 35469 / DSM 13698 / CCUG 18766 / IAM 14443 / JCM 21226 / LMG 7866 / NBRC 102419 / NCTC 12128 / CDC 0568-73)</name>
    <dbReference type="NCBI Taxonomy" id="585054"/>
    <lineage>
        <taxon>Bacteria</taxon>
        <taxon>Pseudomonadati</taxon>
        <taxon>Pseudomonadota</taxon>
        <taxon>Gammaproteobacteria</taxon>
        <taxon>Enterobacterales</taxon>
        <taxon>Enterobacteriaceae</taxon>
        <taxon>Escherichia</taxon>
    </lineage>
</organism>
<keyword id="KW-0031">Aminopeptidase</keyword>
<keyword id="KW-0963">Cytoplasm</keyword>
<keyword id="KW-0378">Hydrolase</keyword>
<keyword id="KW-0479">Metal-binding</keyword>
<keyword id="KW-0482">Metalloprotease</keyword>
<keyword id="KW-0645">Protease</keyword>
<keyword id="KW-0862">Zinc</keyword>
<protein>
    <recommendedName>
        <fullName evidence="1">Mlc titration factor A</fullName>
    </recommendedName>
    <alternativeName>
        <fullName evidence="1">Probable zinc metallopeptidase MtfA</fullName>
        <ecNumber evidence="1">3.4.11.-</ecNumber>
    </alternativeName>
</protein>
<name>MTFA_ESCF3</name>
<evidence type="ECO:0000255" key="1">
    <source>
        <dbReference type="HAMAP-Rule" id="MF_01593"/>
    </source>
</evidence>
<proteinExistence type="inferred from homology"/>